<organism>
    <name type="scientific">Escherichia coli O157:H7</name>
    <dbReference type="NCBI Taxonomy" id="83334"/>
    <lineage>
        <taxon>Bacteria</taxon>
        <taxon>Pseudomonadati</taxon>
        <taxon>Pseudomonadota</taxon>
        <taxon>Gammaproteobacteria</taxon>
        <taxon>Enterobacterales</taxon>
        <taxon>Enterobacteriaceae</taxon>
        <taxon>Escherichia</taxon>
    </lineage>
</organism>
<comment type="function">
    <text evidence="1">Part of the outer membrane protein assembly complex, which is involved in assembly and insertion of beta-barrel proteins into the outer membrane. Constitutes, with BamD, the core component of the assembly machinery.</text>
</comment>
<comment type="subunit">
    <text evidence="1">Part of the Bam complex, which is composed of the outer membrane protein BamA, and four lipoproteins BamB, BamC, BamD and BamE.</text>
</comment>
<comment type="subcellular location">
    <subcellularLocation>
        <location evidence="1">Cell outer membrane</location>
    </subcellularLocation>
</comment>
<comment type="similarity">
    <text evidence="1">Belongs to the BamA family.</text>
</comment>
<evidence type="ECO:0000255" key="1">
    <source>
        <dbReference type="HAMAP-Rule" id="MF_01430"/>
    </source>
</evidence>
<evidence type="ECO:0000255" key="2">
    <source>
        <dbReference type="PROSITE-ProRule" id="PRU01115"/>
    </source>
</evidence>
<protein>
    <recommendedName>
        <fullName evidence="1">Outer membrane protein assembly factor BamA</fullName>
    </recommendedName>
</protein>
<keyword id="KW-0998">Cell outer membrane</keyword>
<keyword id="KW-0472">Membrane</keyword>
<keyword id="KW-1185">Reference proteome</keyword>
<keyword id="KW-0677">Repeat</keyword>
<keyword id="KW-0732">Signal</keyword>
<keyword id="KW-0812">Transmembrane</keyword>
<keyword id="KW-1134">Transmembrane beta strand</keyword>
<accession>P0A942</accession>
<accession>P39170</accession>
<accession>P39181</accession>
<accession>P77465</accession>
<name>BAMA_ECO57</name>
<gene>
    <name evidence="1" type="primary">bamA</name>
    <name type="synonym">yaeT</name>
    <name type="ordered locus">Z0188</name>
    <name type="ordered locus">ECs0179</name>
</gene>
<dbReference type="EMBL" id="AE005174">
    <property type="protein sequence ID" value="AAG54479.1"/>
    <property type="molecule type" value="Genomic_DNA"/>
</dbReference>
<dbReference type="EMBL" id="BA000007">
    <property type="protein sequence ID" value="BAB33602.1"/>
    <property type="molecule type" value="Genomic_DNA"/>
</dbReference>
<dbReference type="PIR" id="C85502">
    <property type="entry name" value="C85502"/>
</dbReference>
<dbReference type="PIR" id="C90651">
    <property type="entry name" value="C90651"/>
</dbReference>
<dbReference type="RefSeq" id="NP_308206.1">
    <property type="nucleotide sequence ID" value="NC_002695.1"/>
</dbReference>
<dbReference type="RefSeq" id="WP_001240896.1">
    <property type="nucleotide sequence ID" value="NZ_VOAI01000002.1"/>
</dbReference>
<dbReference type="SMR" id="P0A942"/>
<dbReference type="IntAct" id="P0A942">
    <property type="interactions" value="1"/>
</dbReference>
<dbReference type="STRING" id="155864.Z0188"/>
<dbReference type="ABCD" id="P0A942">
    <property type="antibodies" value="21 sequenced antibodies"/>
</dbReference>
<dbReference type="GeneID" id="913887"/>
<dbReference type="GeneID" id="93777248"/>
<dbReference type="KEGG" id="ece:Z0188"/>
<dbReference type="KEGG" id="ecs:ECs_0179"/>
<dbReference type="PATRIC" id="fig|386585.9.peg.282"/>
<dbReference type="eggNOG" id="COG4775">
    <property type="taxonomic scope" value="Bacteria"/>
</dbReference>
<dbReference type="HOGENOM" id="CLU_007664_1_0_6"/>
<dbReference type="OMA" id="TNPRIFD"/>
<dbReference type="Proteomes" id="UP000000558">
    <property type="component" value="Chromosome"/>
</dbReference>
<dbReference type="Proteomes" id="UP000002519">
    <property type="component" value="Chromosome"/>
</dbReference>
<dbReference type="GO" id="GO:1990063">
    <property type="term" value="C:Bam protein complex"/>
    <property type="evidence" value="ECO:0007669"/>
    <property type="project" value="TreeGrafter"/>
</dbReference>
<dbReference type="GO" id="GO:0043165">
    <property type="term" value="P:Gram-negative-bacterium-type cell outer membrane assembly"/>
    <property type="evidence" value="ECO:0007669"/>
    <property type="project" value="UniProtKB-UniRule"/>
</dbReference>
<dbReference type="GO" id="GO:0051205">
    <property type="term" value="P:protein insertion into membrane"/>
    <property type="evidence" value="ECO:0007669"/>
    <property type="project" value="UniProtKB-UniRule"/>
</dbReference>
<dbReference type="FunFam" id="2.40.160.50:FF:000001">
    <property type="entry name" value="Outer membrane protein assembly factor BamA"/>
    <property type="match status" value="1"/>
</dbReference>
<dbReference type="FunFam" id="3.10.20.310:FF:000001">
    <property type="entry name" value="Outer membrane protein assembly factor BamA"/>
    <property type="match status" value="1"/>
</dbReference>
<dbReference type="FunFam" id="3.10.20.310:FF:000002">
    <property type="entry name" value="Outer membrane protein assembly factor BamA"/>
    <property type="match status" value="1"/>
</dbReference>
<dbReference type="FunFam" id="3.10.20.310:FF:000003">
    <property type="entry name" value="Outer membrane protein assembly factor BamA"/>
    <property type="match status" value="1"/>
</dbReference>
<dbReference type="FunFam" id="3.10.20.310:FF:000004">
    <property type="entry name" value="Outer membrane protein assembly factor BamA"/>
    <property type="match status" value="1"/>
</dbReference>
<dbReference type="FunFam" id="3.10.20.310:FF:000005">
    <property type="entry name" value="Outer membrane protein assembly factor BamA"/>
    <property type="match status" value="1"/>
</dbReference>
<dbReference type="Gene3D" id="3.10.20.310">
    <property type="entry name" value="membrane protein fhac"/>
    <property type="match status" value="5"/>
</dbReference>
<dbReference type="Gene3D" id="2.40.160.50">
    <property type="entry name" value="membrane protein fhac: a member of the omp85/tpsb transporter family"/>
    <property type="match status" value="1"/>
</dbReference>
<dbReference type="HAMAP" id="MF_01430">
    <property type="entry name" value="OM_assembly_BamA"/>
    <property type="match status" value="1"/>
</dbReference>
<dbReference type="InterPro" id="IPR000184">
    <property type="entry name" value="Bac_surfAg_D15"/>
</dbReference>
<dbReference type="InterPro" id="IPR010827">
    <property type="entry name" value="BamA/TamA_POTRA"/>
</dbReference>
<dbReference type="InterPro" id="IPR039910">
    <property type="entry name" value="D15-like"/>
</dbReference>
<dbReference type="InterPro" id="IPR023707">
    <property type="entry name" value="OM_assembly_BamA"/>
</dbReference>
<dbReference type="InterPro" id="IPR034746">
    <property type="entry name" value="POTRA"/>
</dbReference>
<dbReference type="NCBIfam" id="TIGR03303">
    <property type="entry name" value="OM_YaeT"/>
    <property type="match status" value="1"/>
</dbReference>
<dbReference type="NCBIfam" id="NF008287">
    <property type="entry name" value="PRK11067.1"/>
    <property type="match status" value="1"/>
</dbReference>
<dbReference type="PANTHER" id="PTHR12815:SF23">
    <property type="entry name" value="OUTER MEMBRANE PROTEIN ASSEMBLY FACTOR BAMA"/>
    <property type="match status" value="1"/>
</dbReference>
<dbReference type="PANTHER" id="PTHR12815">
    <property type="entry name" value="SORTING AND ASSEMBLY MACHINERY SAMM50 PROTEIN FAMILY MEMBER"/>
    <property type="match status" value="1"/>
</dbReference>
<dbReference type="Pfam" id="PF01103">
    <property type="entry name" value="Omp85"/>
    <property type="match status" value="1"/>
</dbReference>
<dbReference type="Pfam" id="PF07244">
    <property type="entry name" value="POTRA"/>
    <property type="match status" value="4"/>
</dbReference>
<dbReference type="PIRSF" id="PIRSF006076">
    <property type="entry name" value="OM_assembly_OMP85"/>
    <property type="match status" value="1"/>
</dbReference>
<dbReference type="PROSITE" id="PS51779">
    <property type="entry name" value="POTRA"/>
    <property type="match status" value="5"/>
</dbReference>
<sequence>MAMKKLLIASLLFSSATVYGAEGFVVKDIHFEGLQRVAVGAALLSMPVRTGDTVNDEDISNTIRALFATGNFEDVRVLRDGDTLLVQVKERPTIASITFSGNKSVKDDMLKQNLEASGVRVGESLDRTTIADIEKGLEDFYYSVGKYSASVKAVVTPLPRNRVDLKLVFQEGVSAEIQQINIVGNHAFTTDELISHFQLRDEVPWWNVVGDRKYQKQKLAGDLETLRSYYLDRGYARFNIDSTQVSLTPDKKGIYVTVNITEGDQYKLSGVEVSGNLAGHSAEIEQLTKIEPGELYNGTKVTKMEDDIKKLLGRYGYAYPRVQSMPEINDADKTVKLRVNVDAGNRFYVRKIRFEGNDTSKDAVLRREMRQMEGAWLGSDLVDQGKERLNRLGFFETVDTDTQRVPGSPDQVDVVYKVKERNTGSFNFGIGYGTESGVSFQAGVQQDNWLGTGYAVGINGTKNDYQTYAELSVTNPYFTVDGVSLGGRLFYNDFQADDADLSDYTNKSYGTDVTLGFPINEYNSLRAGLGYVHNSLSNMQPQVAMWRYLYSMGEHPSTSDQDNSFKTDDFTFNYGWTYNKLDRGYFPTDGSRVNLTGKVTIPGSDNEYYKVTLDTATYVPIDDDHKWVVLGRTRWGYGDGLGGKEMPFYENFYAGGSSTVRGFQSNTIGPKAVYFPHQASNYDPDYDYECATQDGAKDLCKSDDAVGGNAMAVASLEFITPTPFISDKYANSVRTSFFWDMGTVWDTNWDSSQYSGYPDYSDPSNIRMSAGIALQWMSPLGPLVFSYAQPFKKYDGDKAEQFQFNIGKTW</sequence>
<reference key="1">
    <citation type="journal article" date="2001" name="Nature">
        <title>Genome sequence of enterohaemorrhagic Escherichia coli O157:H7.</title>
        <authorList>
            <person name="Perna N.T."/>
            <person name="Plunkett G. III"/>
            <person name="Burland V."/>
            <person name="Mau B."/>
            <person name="Glasner J.D."/>
            <person name="Rose D.J."/>
            <person name="Mayhew G.F."/>
            <person name="Evans P.S."/>
            <person name="Gregor J."/>
            <person name="Kirkpatrick H.A."/>
            <person name="Posfai G."/>
            <person name="Hackett J."/>
            <person name="Klink S."/>
            <person name="Boutin A."/>
            <person name="Shao Y."/>
            <person name="Miller L."/>
            <person name="Grotbeck E.J."/>
            <person name="Davis N.W."/>
            <person name="Lim A."/>
            <person name="Dimalanta E.T."/>
            <person name="Potamousis K."/>
            <person name="Apodaca J."/>
            <person name="Anantharaman T.S."/>
            <person name="Lin J."/>
            <person name="Yen G."/>
            <person name="Schwartz D.C."/>
            <person name="Welch R.A."/>
            <person name="Blattner F.R."/>
        </authorList>
    </citation>
    <scope>NUCLEOTIDE SEQUENCE [LARGE SCALE GENOMIC DNA]</scope>
    <source>
        <strain>O157:H7 / EDL933 / ATCC 700927 / EHEC</strain>
    </source>
</reference>
<reference key="2">
    <citation type="journal article" date="2001" name="DNA Res.">
        <title>Complete genome sequence of enterohemorrhagic Escherichia coli O157:H7 and genomic comparison with a laboratory strain K-12.</title>
        <authorList>
            <person name="Hayashi T."/>
            <person name="Makino K."/>
            <person name="Ohnishi M."/>
            <person name="Kurokawa K."/>
            <person name="Ishii K."/>
            <person name="Yokoyama K."/>
            <person name="Han C.-G."/>
            <person name="Ohtsubo E."/>
            <person name="Nakayama K."/>
            <person name="Murata T."/>
            <person name="Tanaka M."/>
            <person name="Tobe T."/>
            <person name="Iida T."/>
            <person name="Takami H."/>
            <person name="Honda T."/>
            <person name="Sasakawa C."/>
            <person name="Ogasawara N."/>
            <person name="Yasunaga T."/>
            <person name="Kuhara S."/>
            <person name="Shiba T."/>
            <person name="Hattori M."/>
            <person name="Shinagawa H."/>
        </authorList>
    </citation>
    <scope>NUCLEOTIDE SEQUENCE [LARGE SCALE GENOMIC DNA]</scope>
    <source>
        <strain>O157:H7 / Sakai / RIMD 0509952 / EHEC</strain>
    </source>
</reference>
<proteinExistence type="inferred from homology"/>
<feature type="signal peptide" evidence="1">
    <location>
        <begin position="1"/>
        <end position="20"/>
    </location>
</feature>
<feature type="chain" id="PRO_0000033472" description="Outer membrane protein assembly factor BamA">
    <location>
        <begin position="21"/>
        <end position="810"/>
    </location>
</feature>
<feature type="domain" description="POTRA 1" evidence="2">
    <location>
        <begin position="24"/>
        <end position="91"/>
    </location>
</feature>
<feature type="domain" description="POTRA 2" evidence="2">
    <location>
        <begin position="92"/>
        <end position="172"/>
    </location>
</feature>
<feature type="domain" description="POTRA 3" evidence="2">
    <location>
        <begin position="175"/>
        <end position="263"/>
    </location>
</feature>
<feature type="domain" description="POTRA 4" evidence="2">
    <location>
        <begin position="266"/>
        <end position="344"/>
    </location>
</feature>
<feature type="domain" description="POTRA 5" evidence="2">
    <location>
        <begin position="347"/>
        <end position="421"/>
    </location>
</feature>